<keyword id="KW-0143">Chaperone</keyword>
<keyword id="KW-0963">Cytoplasm</keyword>
<keyword id="KW-1185">Reference proteome</keyword>
<keyword id="KW-0346">Stress response</keyword>
<organism>
    <name type="scientific">Hyphomonas neptunium (strain ATCC 15444)</name>
    <dbReference type="NCBI Taxonomy" id="228405"/>
    <lineage>
        <taxon>Bacteria</taxon>
        <taxon>Pseudomonadati</taxon>
        <taxon>Pseudomonadota</taxon>
        <taxon>Alphaproteobacteria</taxon>
        <taxon>Hyphomonadales</taxon>
        <taxon>Hyphomonadaceae</taxon>
        <taxon>Hyphomonas</taxon>
    </lineage>
</organism>
<accession>Q0BX02</accession>
<dbReference type="EMBL" id="CP000158">
    <property type="protein sequence ID" value="ABI75635.1"/>
    <property type="molecule type" value="Genomic_DNA"/>
</dbReference>
<dbReference type="RefSeq" id="WP_011648286.1">
    <property type="nucleotide sequence ID" value="NC_008358.1"/>
</dbReference>
<dbReference type="SMR" id="Q0BX02"/>
<dbReference type="STRING" id="228405.HNE_3318"/>
<dbReference type="KEGG" id="hne:HNE_3318"/>
<dbReference type="eggNOG" id="COG0576">
    <property type="taxonomic scope" value="Bacteria"/>
</dbReference>
<dbReference type="HOGENOM" id="CLU_057217_6_2_5"/>
<dbReference type="Proteomes" id="UP000001959">
    <property type="component" value="Chromosome"/>
</dbReference>
<dbReference type="GO" id="GO:0005737">
    <property type="term" value="C:cytoplasm"/>
    <property type="evidence" value="ECO:0007669"/>
    <property type="project" value="UniProtKB-SubCell"/>
</dbReference>
<dbReference type="GO" id="GO:0000774">
    <property type="term" value="F:adenyl-nucleotide exchange factor activity"/>
    <property type="evidence" value="ECO:0007669"/>
    <property type="project" value="InterPro"/>
</dbReference>
<dbReference type="GO" id="GO:0042803">
    <property type="term" value="F:protein homodimerization activity"/>
    <property type="evidence" value="ECO:0007669"/>
    <property type="project" value="InterPro"/>
</dbReference>
<dbReference type="GO" id="GO:0051087">
    <property type="term" value="F:protein-folding chaperone binding"/>
    <property type="evidence" value="ECO:0007669"/>
    <property type="project" value="InterPro"/>
</dbReference>
<dbReference type="GO" id="GO:0051082">
    <property type="term" value="F:unfolded protein binding"/>
    <property type="evidence" value="ECO:0007669"/>
    <property type="project" value="TreeGrafter"/>
</dbReference>
<dbReference type="GO" id="GO:0006457">
    <property type="term" value="P:protein folding"/>
    <property type="evidence" value="ECO:0007669"/>
    <property type="project" value="InterPro"/>
</dbReference>
<dbReference type="CDD" id="cd00446">
    <property type="entry name" value="GrpE"/>
    <property type="match status" value="1"/>
</dbReference>
<dbReference type="Gene3D" id="3.90.20.20">
    <property type="match status" value="1"/>
</dbReference>
<dbReference type="Gene3D" id="2.30.22.10">
    <property type="entry name" value="Head domain of nucleotide exchange factor GrpE"/>
    <property type="match status" value="1"/>
</dbReference>
<dbReference type="HAMAP" id="MF_01151">
    <property type="entry name" value="GrpE"/>
    <property type="match status" value="1"/>
</dbReference>
<dbReference type="InterPro" id="IPR000740">
    <property type="entry name" value="GrpE"/>
</dbReference>
<dbReference type="InterPro" id="IPR013805">
    <property type="entry name" value="GrpE_coiled_coil"/>
</dbReference>
<dbReference type="InterPro" id="IPR009012">
    <property type="entry name" value="GrpE_head"/>
</dbReference>
<dbReference type="PANTHER" id="PTHR21237">
    <property type="entry name" value="GRPE PROTEIN"/>
    <property type="match status" value="1"/>
</dbReference>
<dbReference type="PANTHER" id="PTHR21237:SF23">
    <property type="entry name" value="GRPE PROTEIN HOMOLOG, MITOCHONDRIAL"/>
    <property type="match status" value="1"/>
</dbReference>
<dbReference type="Pfam" id="PF01025">
    <property type="entry name" value="GrpE"/>
    <property type="match status" value="1"/>
</dbReference>
<dbReference type="PRINTS" id="PR00773">
    <property type="entry name" value="GRPEPROTEIN"/>
</dbReference>
<dbReference type="SUPFAM" id="SSF58014">
    <property type="entry name" value="Coiled-coil domain of nucleotide exchange factor GrpE"/>
    <property type="match status" value="1"/>
</dbReference>
<dbReference type="SUPFAM" id="SSF51064">
    <property type="entry name" value="Head domain of nucleotide exchange factor GrpE"/>
    <property type="match status" value="1"/>
</dbReference>
<reference key="1">
    <citation type="journal article" date="2006" name="J. Bacteriol.">
        <title>Comparative genomic evidence for a close relationship between the dimorphic prosthecate bacteria Hyphomonas neptunium and Caulobacter crescentus.</title>
        <authorList>
            <person name="Badger J.H."/>
            <person name="Hoover T.R."/>
            <person name="Brun Y.V."/>
            <person name="Weiner R.M."/>
            <person name="Laub M.T."/>
            <person name="Alexandre G."/>
            <person name="Mrazek J."/>
            <person name="Ren Q."/>
            <person name="Paulsen I.T."/>
            <person name="Nelson K.E."/>
            <person name="Khouri H.M."/>
            <person name="Radune D."/>
            <person name="Sosa J."/>
            <person name="Dodson R.J."/>
            <person name="Sullivan S.A."/>
            <person name="Rosovitz M.J."/>
            <person name="Madupu R."/>
            <person name="Brinkac L.M."/>
            <person name="Durkin A.S."/>
            <person name="Daugherty S.C."/>
            <person name="Kothari S.P."/>
            <person name="Giglio M.G."/>
            <person name="Zhou L."/>
            <person name="Haft D.H."/>
            <person name="Selengut J.D."/>
            <person name="Davidsen T.M."/>
            <person name="Yang Q."/>
            <person name="Zafar N."/>
            <person name="Ward N.L."/>
        </authorList>
    </citation>
    <scope>NUCLEOTIDE SEQUENCE [LARGE SCALE GENOMIC DNA]</scope>
    <source>
        <strain>ATCC 15444</strain>
    </source>
</reference>
<name>GRPE_HYPNA</name>
<protein>
    <recommendedName>
        <fullName evidence="1">Protein GrpE</fullName>
    </recommendedName>
    <alternativeName>
        <fullName evidence="1">HSP-70 cofactor</fullName>
    </alternativeName>
</protein>
<feature type="chain" id="PRO_1000164195" description="Protein GrpE">
    <location>
        <begin position="1"/>
        <end position="188"/>
    </location>
</feature>
<feature type="region of interest" description="Disordered" evidence="2">
    <location>
        <begin position="1"/>
        <end position="24"/>
    </location>
</feature>
<gene>
    <name evidence="1" type="primary">grpE</name>
    <name type="ordered locus">HNE_3318</name>
</gene>
<sequence>MSDENKPGEAAELDAGVAPEAQPETELTVEELIIRLEAEKADMNGQILRLLADLDNTRKRADRQVSEARIYAIEKFAADLLSVSDNLSRALDALPDSERENLTDAGKNLLGGIEMTAKELNTALSRHGVVPVPAEPGAVFDPNVHQAVAQIPSPQPSGTIAQLFQPGWKIGDRTLRAAMVAVSTGPAN</sequence>
<evidence type="ECO:0000255" key="1">
    <source>
        <dbReference type="HAMAP-Rule" id="MF_01151"/>
    </source>
</evidence>
<evidence type="ECO:0000256" key="2">
    <source>
        <dbReference type="SAM" id="MobiDB-lite"/>
    </source>
</evidence>
<comment type="function">
    <text evidence="1">Participates actively in the response to hyperosmotic and heat shock by preventing the aggregation of stress-denatured proteins, in association with DnaK and GrpE. It is the nucleotide exchange factor for DnaK and may function as a thermosensor. Unfolded proteins bind initially to DnaJ; upon interaction with the DnaJ-bound protein, DnaK hydrolyzes its bound ATP, resulting in the formation of a stable complex. GrpE releases ADP from DnaK; ATP binding to DnaK triggers the release of the substrate protein, thus completing the reaction cycle. Several rounds of ATP-dependent interactions between DnaJ, DnaK and GrpE are required for fully efficient folding.</text>
</comment>
<comment type="subunit">
    <text evidence="1">Homodimer.</text>
</comment>
<comment type="subcellular location">
    <subcellularLocation>
        <location evidence="1">Cytoplasm</location>
    </subcellularLocation>
</comment>
<comment type="similarity">
    <text evidence="1">Belongs to the GrpE family.</text>
</comment>
<proteinExistence type="inferred from homology"/>